<dbReference type="EC" id="3.5.1.-" evidence="1"/>
<dbReference type="EMBL" id="AP009384">
    <property type="protein sequence ID" value="BAF88494.1"/>
    <property type="molecule type" value="Genomic_DNA"/>
</dbReference>
<dbReference type="RefSeq" id="WP_012171022.1">
    <property type="nucleotide sequence ID" value="NC_009937.1"/>
</dbReference>
<dbReference type="SMR" id="A8IAD8"/>
<dbReference type="STRING" id="438753.AZC_2496"/>
<dbReference type="ESTHER" id="azoc5-rutd">
    <property type="family name" value="RutD"/>
</dbReference>
<dbReference type="KEGG" id="azc:AZC_2496"/>
<dbReference type="eggNOG" id="COG2021">
    <property type="taxonomic scope" value="Bacteria"/>
</dbReference>
<dbReference type="HOGENOM" id="CLU_020336_50_1_5"/>
<dbReference type="Proteomes" id="UP000000270">
    <property type="component" value="Chromosome"/>
</dbReference>
<dbReference type="GO" id="GO:0016811">
    <property type="term" value="F:hydrolase activity, acting on carbon-nitrogen (but not peptide) bonds, in linear amides"/>
    <property type="evidence" value="ECO:0007669"/>
    <property type="project" value="InterPro"/>
</dbReference>
<dbReference type="GO" id="GO:0019740">
    <property type="term" value="P:nitrogen utilization"/>
    <property type="evidence" value="ECO:0007669"/>
    <property type="project" value="UniProtKB-UniRule"/>
</dbReference>
<dbReference type="GO" id="GO:0006212">
    <property type="term" value="P:uracil catabolic process"/>
    <property type="evidence" value="ECO:0007669"/>
    <property type="project" value="UniProtKB-UniRule"/>
</dbReference>
<dbReference type="Gene3D" id="3.40.50.1820">
    <property type="entry name" value="alpha/beta hydrolase"/>
    <property type="match status" value="1"/>
</dbReference>
<dbReference type="HAMAP" id="MF_00832">
    <property type="entry name" value="RutD"/>
    <property type="match status" value="1"/>
</dbReference>
<dbReference type="InterPro" id="IPR050471">
    <property type="entry name" value="AB_hydrolase"/>
</dbReference>
<dbReference type="InterPro" id="IPR000073">
    <property type="entry name" value="AB_hydrolase_1"/>
</dbReference>
<dbReference type="InterPro" id="IPR029058">
    <property type="entry name" value="AB_hydrolase_fold"/>
</dbReference>
<dbReference type="InterPro" id="IPR019913">
    <property type="entry name" value="Pyrimidine_utilisation_RutD"/>
</dbReference>
<dbReference type="NCBIfam" id="TIGR03611">
    <property type="entry name" value="RutD"/>
    <property type="match status" value="1"/>
</dbReference>
<dbReference type="PANTHER" id="PTHR43433:SF10">
    <property type="entry name" value="AB HYDROLASE-1 DOMAIN-CONTAINING PROTEIN"/>
    <property type="match status" value="1"/>
</dbReference>
<dbReference type="PANTHER" id="PTHR43433">
    <property type="entry name" value="HYDROLASE, ALPHA/BETA FOLD FAMILY PROTEIN"/>
    <property type="match status" value="1"/>
</dbReference>
<dbReference type="Pfam" id="PF00561">
    <property type="entry name" value="Abhydrolase_1"/>
    <property type="match status" value="1"/>
</dbReference>
<dbReference type="PRINTS" id="PR00111">
    <property type="entry name" value="ABHYDROLASE"/>
</dbReference>
<dbReference type="SUPFAM" id="SSF53474">
    <property type="entry name" value="alpha/beta-Hydrolases"/>
    <property type="match status" value="1"/>
</dbReference>
<gene>
    <name evidence="1" type="primary">rutD</name>
    <name type="ordered locus">AZC_2496</name>
</gene>
<feature type="chain" id="PRO_0000402927" description="Putative carbamate hydrolase RutD">
    <location>
        <begin position="1"/>
        <end position="265"/>
    </location>
</feature>
<feature type="domain" description="AB hydrolase-1" evidence="1">
    <location>
        <begin position="21"/>
        <end position="123"/>
    </location>
</feature>
<accession>A8IAD8</accession>
<sequence length="265" mass="28703">MPYAHGGDADLYYEIHGAGTPILLSAGMGGGAGFWRPQIEALAARHQVILYDHAGTGRSGRDIGPRSITEMARDMARVLDAAGVEDAHVAGHAIGGIIGMELALAAPERVRSLTIVNGWARADGFLRRCFEVRKRILLASGPEAYVRAQPLFLYPPRWIAENIAVLEEEEAQMVAHFPGTQTMLNRIETFLAFDGRERLADIRVPTLLAAAKDDALVPSYLSTLLAEGIPDARIAEVDWGAHAFSAVTPDVFNEMLLGFCGEIDQ</sequence>
<evidence type="ECO:0000255" key="1">
    <source>
        <dbReference type="HAMAP-Rule" id="MF_00832"/>
    </source>
</evidence>
<name>RUTD_AZOC5</name>
<proteinExistence type="inferred from homology"/>
<keyword id="KW-0378">Hydrolase</keyword>
<keyword id="KW-1185">Reference proteome</keyword>
<reference key="1">
    <citation type="submission" date="2007-04" db="EMBL/GenBank/DDBJ databases">
        <title>Complete genome sequence of the nitrogen-fixing bacterium Azorhizobium caulinodans ORS571.</title>
        <authorList>
            <person name="Lee K.B."/>
            <person name="Backer P.D."/>
            <person name="Aono T."/>
            <person name="Liu C.T."/>
            <person name="Suzuki S."/>
            <person name="Suzuki T."/>
            <person name="Kaneko T."/>
            <person name="Yamada M."/>
            <person name="Tabata S."/>
            <person name="Kupfer D.M."/>
            <person name="Najar F.Z."/>
            <person name="Wiley G.B."/>
            <person name="Roe B."/>
            <person name="Binnewies T."/>
            <person name="Ussery D."/>
            <person name="Vereecke D."/>
            <person name="Gevers D."/>
            <person name="Holsters M."/>
            <person name="Oyaizu H."/>
        </authorList>
    </citation>
    <scope>NUCLEOTIDE SEQUENCE [LARGE SCALE GENOMIC DNA]</scope>
    <source>
        <strain>ATCC 43989 / DSM 5975 / JCM 20966 / LMG 6465 / NBRC 14845 / NCIMB 13405 / ORS 571</strain>
    </source>
</reference>
<comment type="function">
    <text evidence="1">Involved in pyrimidine catabolism. May facilitate the hydrolysis of carbamate, a reaction that can also occur spontaneously.</text>
</comment>
<comment type="catalytic activity">
    <reaction evidence="1">
        <text>carbamate + 2 H(+) = NH4(+) + CO2</text>
        <dbReference type="Rhea" id="RHEA:15649"/>
        <dbReference type="ChEBI" id="CHEBI:13941"/>
        <dbReference type="ChEBI" id="CHEBI:15378"/>
        <dbReference type="ChEBI" id="CHEBI:16526"/>
        <dbReference type="ChEBI" id="CHEBI:28938"/>
    </reaction>
</comment>
<comment type="similarity">
    <text evidence="1">Belongs to the AB hydrolase superfamily. Hydrolase RutD family.</text>
</comment>
<organism>
    <name type="scientific">Azorhizobium caulinodans (strain ATCC 43989 / DSM 5975 / JCM 20966 / LMG 6465 / NBRC 14845 / NCIMB 13405 / ORS 571)</name>
    <dbReference type="NCBI Taxonomy" id="438753"/>
    <lineage>
        <taxon>Bacteria</taxon>
        <taxon>Pseudomonadati</taxon>
        <taxon>Pseudomonadota</taxon>
        <taxon>Alphaproteobacteria</taxon>
        <taxon>Hyphomicrobiales</taxon>
        <taxon>Xanthobacteraceae</taxon>
        <taxon>Azorhizobium</taxon>
    </lineage>
</organism>
<protein>
    <recommendedName>
        <fullName evidence="1">Putative carbamate hydrolase RutD</fullName>
        <ecNumber evidence="1">3.5.1.-</ecNumber>
    </recommendedName>
    <alternativeName>
        <fullName evidence="1">Aminohydrolase</fullName>
    </alternativeName>
</protein>